<name>PDXH_NEIG1</name>
<sequence length="210" mass="24177">MDLHNIREDYSKRELSEADCADNPIEQFERWLDEAVRAEVNEPTAVNVAAVDGRGRPNSRMVLLKEVNSEGFVFFTNYHSRKGRSLELNPFAAMTFFWPELERQVRVEGRVGRLAEKLSDEYFESRPYQSRLGAWASAQSEVIPNKAVLVAKAAAVGLKHPLHVPRPPHWGGYIVIPDLIEFWQGRPSRLHDRIQYRLLDGGWIRERLSP</sequence>
<reference key="1">
    <citation type="submission" date="2003-03" db="EMBL/GenBank/DDBJ databases">
        <title>The complete genome sequence of Neisseria gonorrhoeae.</title>
        <authorList>
            <person name="Lewis L.A."/>
            <person name="Gillaspy A.F."/>
            <person name="McLaughlin R.E."/>
            <person name="Gipson M."/>
            <person name="Ducey T.F."/>
            <person name="Ownbey T."/>
            <person name="Hartman K."/>
            <person name="Nydick C."/>
            <person name="Carson M.B."/>
            <person name="Vaughn J."/>
            <person name="Thomson C."/>
            <person name="Song L."/>
            <person name="Lin S."/>
            <person name="Yuan X."/>
            <person name="Najar F."/>
            <person name="Zhan M."/>
            <person name="Ren Q."/>
            <person name="Zhu H."/>
            <person name="Qi S."/>
            <person name="Kenton S.M."/>
            <person name="Lai H."/>
            <person name="White J.D."/>
            <person name="Clifton S."/>
            <person name="Roe B.A."/>
            <person name="Dyer D.W."/>
        </authorList>
    </citation>
    <scope>NUCLEOTIDE SEQUENCE [LARGE SCALE GENOMIC DNA]</scope>
    <source>
        <strain>ATCC 700825 / FA 1090</strain>
    </source>
</reference>
<keyword id="KW-0285">Flavoprotein</keyword>
<keyword id="KW-0288">FMN</keyword>
<keyword id="KW-0560">Oxidoreductase</keyword>
<keyword id="KW-0664">Pyridoxine biosynthesis</keyword>
<keyword id="KW-1185">Reference proteome</keyword>
<protein>
    <recommendedName>
        <fullName evidence="1">Pyridoxine/pyridoxamine 5'-phosphate oxidase</fullName>
        <ecNumber evidence="1">1.4.3.5</ecNumber>
    </recommendedName>
    <alternativeName>
        <fullName evidence="1">PNP/PMP oxidase</fullName>
        <shortName evidence="1">PNPOx</shortName>
    </alternativeName>
    <alternativeName>
        <fullName evidence="1">Pyridoxal 5'-phosphate synthase</fullName>
    </alternativeName>
</protein>
<comment type="function">
    <text evidence="1">Catalyzes the oxidation of either pyridoxine 5'-phosphate (PNP) or pyridoxamine 5'-phosphate (PMP) into pyridoxal 5'-phosphate (PLP).</text>
</comment>
<comment type="catalytic activity">
    <reaction evidence="1">
        <text>pyridoxamine 5'-phosphate + O2 + H2O = pyridoxal 5'-phosphate + H2O2 + NH4(+)</text>
        <dbReference type="Rhea" id="RHEA:15817"/>
        <dbReference type="ChEBI" id="CHEBI:15377"/>
        <dbReference type="ChEBI" id="CHEBI:15379"/>
        <dbReference type="ChEBI" id="CHEBI:16240"/>
        <dbReference type="ChEBI" id="CHEBI:28938"/>
        <dbReference type="ChEBI" id="CHEBI:58451"/>
        <dbReference type="ChEBI" id="CHEBI:597326"/>
        <dbReference type="EC" id="1.4.3.5"/>
    </reaction>
</comment>
<comment type="catalytic activity">
    <reaction evidence="1">
        <text>pyridoxine 5'-phosphate + O2 = pyridoxal 5'-phosphate + H2O2</text>
        <dbReference type="Rhea" id="RHEA:15149"/>
        <dbReference type="ChEBI" id="CHEBI:15379"/>
        <dbReference type="ChEBI" id="CHEBI:16240"/>
        <dbReference type="ChEBI" id="CHEBI:58589"/>
        <dbReference type="ChEBI" id="CHEBI:597326"/>
        <dbReference type="EC" id="1.4.3.5"/>
    </reaction>
</comment>
<comment type="cofactor">
    <cofactor evidence="1">
        <name>FMN</name>
        <dbReference type="ChEBI" id="CHEBI:58210"/>
    </cofactor>
    <text evidence="1">Binds 1 FMN per subunit.</text>
</comment>
<comment type="pathway">
    <text evidence="1">Cofactor metabolism; pyridoxal 5'-phosphate salvage; pyridoxal 5'-phosphate from pyridoxamine 5'-phosphate: step 1/1.</text>
</comment>
<comment type="pathway">
    <text evidence="1">Cofactor metabolism; pyridoxal 5'-phosphate salvage; pyridoxal 5'-phosphate from pyridoxine 5'-phosphate: step 1/1.</text>
</comment>
<comment type="subunit">
    <text evidence="1">Homodimer.</text>
</comment>
<comment type="similarity">
    <text evidence="1">Belongs to the pyridoxamine 5'-phosphate oxidase family.</text>
</comment>
<organism>
    <name type="scientific">Neisseria gonorrhoeae (strain ATCC 700825 / FA 1090)</name>
    <dbReference type="NCBI Taxonomy" id="242231"/>
    <lineage>
        <taxon>Bacteria</taxon>
        <taxon>Pseudomonadati</taxon>
        <taxon>Pseudomonadota</taxon>
        <taxon>Betaproteobacteria</taxon>
        <taxon>Neisseriales</taxon>
        <taxon>Neisseriaceae</taxon>
        <taxon>Neisseria</taxon>
    </lineage>
</organism>
<proteinExistence type="inferred from homology"/>
<accession>Q5F8V2</accession>
<gene>
    <name evidence="1" type="primary">pdxH</name>
    <name type="ordered locus">NGO_0658</name>
</gene>
<evidence type="ECO:0000255" key="1">
    <source>
        <dbReference type="HAMAP-Rule" id="MF_01629"/>
    </source>
</evidence>
<dbReference type="EC" id="1.4.3.5" evidence="1"/>
<dbReference type="EMBL" id="AE004969">
    <property type="protein sequence ID" value="AAW89385.1"/>
    <property type="molecule type" value="Genomic_DNA"/>
</dbReference>
<dbReference type="RefSeq" id="WP_003688841.1">
    <property type="nucleotide sequence ID" value="NC_002946.2"/>
</dbReference>
<dbReference type="RefSeq" id="YP_207797.1">
    <property type="nucleotide sequence ID" value="NC_002946.2"/>
</dbReference>
<dbReference type="SMR" id="Q5F8V2"/>
<dbReference type="STRING" id="242231.NGO_0658"/>
<dbReference type="GeneID" id="66752998"/>
<dbReference type="KEGG" id="ngo:NGO_0658"/>
<dbReference type="PATRIC" id="fig|242231.10.peg.777"/>
<dbReference type="HOGENOM" id="CLU_032263_2_2_4"/>
<dbReference type="UniPathway" id="UPA01068">
    <property type="reaction ID" value="UER00304"/>
</dbReference>
<dbReference type="UniPathway" id="UPA01068">
    <property type="reaction ID" value="UER00305"/>
</dbReference>
<dbReference type="Proteomes" id="UP000000535">
    <property type="component" value="Chromosome"/>
</dbReference>
<dbReference type="GO" id="GO:0010181">
    <property type="term" value="F:FMN binding"/>
    <property type="evidence" value="ECO:0007669"/>
    <property type="project" value="UniProtKB-UniRule"/>
</dbReference>
<dbReference type="GO" id="GO:0004733">
    <property type="term" value="F:pyridoxamine phosphate oxidase activity"/>
    <property type="evidence" value="ECO:0007669"/>
    <property type="project" value="UniProtKB-UniRule"/>
</dbReference>
<dbReference type="GO" id="GO:0008615">
    <property type="term" value="P:pyridoxine biosynthetic process"/>
    <property type="evidence" value="ECO:0007669"/>
    <property type="project" value="UniProtKB-KW"/>
</dbReference>
<dbReference type="FunFam" id="2.30.110.10:FF:000014">
    <property type="entry name" value="Pyridoxine/pyridoxamine 5'-phosphate oxidase"/>
    <property type="match status" value="1"/>
</dbReference>
<dbReference type="Gene3D" id="2.30.110.10">
    <property type="entry name" value="Electron Transport, Fmn-binding Protein, Chain A"/>
    <property type="match status" value="1"/>
</dbReference>
<dbReference type="HAMAP" id="MF_01629">
    <property type="entry name" value="PdxH"/>
    <property type="match status" value="1"/>
</dbReference>
<dbReference type="InterPro" id="IPR000659">
    <property type="entry name" value="Pyridox_Oxase"/>
</dbReference>
<dbReference type="InterPro" id="IPR019740">
    <property type="entry name" value="Pyridox_Oxase_CS"/>
</dbReference>
<dbReference type="InterPro" id="IPR011576">
    <property type="entry name" value="Pyridox_Oxase_N"/>
</dbReference>
<dbReference type="InterPro" id="IPR019576">
    <property type="entry name" value="Pyridoxamine_oxidase_dimer_C"/>
</dbReference>
<dbReference type="InterPro" id="IPR012349">
    <property type="entry name" value="Split_barrel_FMN-bd"/>
</dbReference>
<dbReference type="NCBIfam" id="TIGR00558">
    <property type="entry name" value="pdxH"/>
    <property type="match status" value="1"/>
</dbReference>
<dbReference type="NCBIfam" id="NF004231">
    <property type="entry name" value="PRK05679.1"/>
    <property type="match status" value="1"/>
</dbReference>
<dbReference type="PANTHER" id="PTHR10851:SF0">
    <property type="entry name" value="PYRIDOXINE-5'-PHOSPHATE OXIDASE"/>
    <property type="match status" value="1"/>
</dbReference>
<dbReference type="PANTHER" id="PTHR10851">
    <property type="entry name" value="PYRIDOXINE-5-PHOSPHATE OXIDASE"/>
    <property type="match status" value="1"/>
</dbReference>
<dbReference type="Pfam" id="PF10590">
    <property type="entry name" value="PNP_phzG_C"/>
    <property type="match status" value="1"/>
</dbReference>
<dbReference type="Pfam" id="PF01243">
    <property type="entry name" value="PNPOx_N"/>
    <property type="match status" value="1"/>
</dbReference>
<dbReference type="PIRSF" id="PIRSF000190">
    <property type="entry name" value="Pyd_amn-ph_oxd"/>
    <property type="match status" value="1"/>
</dbReference>
<dbReference type="SUPFAM" id="SSF50475">
    <property type="entry name" value="FMN-binding split barrel"/>
    <property type="match status" value="1"/>
</dbReference>
<dbReference type="PROSITE" id="PS01064">
    <property type="entry name" value="PYRIDOX_OXIDASE"/>
    <property type="match status" value="1"/>
</dbReference>
<feature type="chain" id="PRO_0000167725" description="Pyridoxine/pyridoxamine 5'-phosphate oxidase">
    <location>
        <begin position="1"/>
        <end position="210"/>
    </location>
</feature>
<feature type="binding site" evidence="1">
    <location>
        <begin position="7"/>
        <end position="10"/>
    </location>
    <ligand>
        <name>substrate</name>
    </ligand>
</feature>
<feature type="binding site" evidence="1">
    <location>
        <begin position="60"/>
        <end position="65"/>
    </location>
    <ligand>
        <name>FMN</name>
        <dbReference type="ChEBI" id="CHEBI:58210"/>
    </ligand>
</feature>
<feature type="binding site" evidence="1">
    <location>
        <position position="65"/>
    </location>
    <ligand>
        <name>substrate</name>
    </ligand>
</feature>
<feature type="binding site" evidence="1">
    <location>
        <begin position="75"/>
        <end position="76"/>
    </location>
    <ligand>
        <name>FMN</name>
        <dbReference type="ChEBI" id="CHEBI:58210"/>
    </ligand>
</feature>
<feature type="binding site" evidence="1">
    <location>
        <position position="81"/>
    </location>
    <ligand>
        <name>FMN</name>
        <dbReference type="ChEBI" id="CHEBI:58210"/>
    </ligand>
</feature>
<feature type="binding site" evidence="1">
    <location>
        <position position="82"/>
    </location>
    <ligand>
        <name>FMN</name>
        <dbReference type="ChEBI" id="CHEBI:58210"/>
    </ligand>
</feature>
<feature type="binding site" evidence="1">
    <location>
        <position position="104"/>
    </location>
    <ligand>
        <name>FMN</name>
        <dbReference type="ChEBI" id="CHEBI:58210"/>
    </ligand>
</feature>
<feature type="binding site" evidence="1">
    <location>
        <position position="122"/>
    </location>
    <ligand>
        <name>substrate</name>
    </ligand>
</feature>
<feature type="binding site" evidence="1">
    <location>
        <position position="126"/>
    </location>
    <ligand>
        <name>substrate</name>
    </ligand>
</feature>
<feature type="binding site" evidence="1">
    <location>
        <position position="130"/>
    </location>
    <ligand>
        <name>substrate</name>
    </ligand>
</feature>
<feature type="binding site" evidence="1">
    <location>
        <begin position="139"/>
        <end position="140"/>
    </location>
    <ligand>
        <name>FMN</name>
        <dbReference type="ChEBI" id="CHEBI:58210"/>
    </ligand>
</feature>
<feature type="binding site" evidence="1">
    <location>
        <position position="183"/>
    </location>
    <ligand>
        <name>FMN</name>
        <dbReference type="ChEBI" id="CHEBI:58210"/>
    </ligand>
</feature>
<feature type="binding site" evidence="1">
    <location>
        <begin position="189"/>
        <end position="191"/>
    </location>
    <ligand>
        <name>substrate</name>
    </ligand>
</feature>
<feature type="binding site" evidence="1">
    <location>
        <position position="193"/>
    </location>
    <ligand>
        <name>FMN</name>
        <dbReference type="ChEBI" id="CHEBI:58210"/>
    </ligand>
</feature>